<protein>
    <recommendedName>
        <fullName evidence="1">Argininosuccinate lyase</fullName>
        <shortName evidence="1">ASAL</shortName>
        <ecNumber evidence="1">4.3.2.1</ecNumber>
    </recommendedName>
    <alternativeName>
        <fullName evidence="1">Arginosuccinase</fullName>
    </alternativeName>
</protein>
<organism>
    <name type="scientific">Pseudomonas putida (strain W619)</name>
    <dbReference type="NCBI Taxonomy" id="390235"/>
    <lineage>
        <taxon>Bacteria</taxon>
        <taxon>Pseudomonadati</taxon>
        <taxon>Pseudomonadota</taxon>
        <taxon>Gammaproteobacteria</taxon>
        <taxon>Pseudomonadales</taxon>
        <taxon>Pseudomonadaceae</taxon>
        <taxon>Pseudomonas</taxon>
    </lineage>
</organism>
<accession>B1J1V0</accession>
<comment type="catalytic activity">
    <reaction evidence="1">
        <text>2-(N(omega)-L-arginino)succinate = fumarate + L-arginine</text>
        <dbReference type="Rhea" id="RHEA:24020"/>
        <dbReference type="ChEBI" id="CHEBI:29806"/>
        <dbReference type="ChEBI" id="CHEBI:32682"/>
        <dbReference type="ChEBI" id="CHEBI:57472"/>
        <dbReference type="EC" id="4.3.2.1"/>
    </reaction>
</comment>
<comment type="pathway">
    <text evidence="1">Amino-acid biosynthesis; L-arginine biosynthesis; L-arginine from L-ornithine and carbamoyl phosphate: step 3/3.</text>
</comment>
<comment type="subcellular location">
    <subcellularLocation>
        <location evidence="1">Cytoplasm</location>
    </subcellularLocation>
</comment>
<comment type="similarity">
    <text evidence="1">Belongs to the lyase 1 family. Argininosuccinate lyase subfamily.</text>
</comment>
<proteinExistence type="inferred from homology"/>
<gene>
    <name evidence="1" type="primary">argH</name>
    <name type="ordered locus">PputW619_0254</name>
</gene>
<feature type="chain" id="PRO_1000089103" description="Argininosuccinate lyase">
    <location>
        <begin position="1"/>
        <end position="464"/>
    </location>
</feature>
<sequence>MSTDKTNQSWGGRFSEPVDAFVARFTASVDFDKRLYRHDIMGSIAHATMLAQVGVLSDAERDTIIDGLNTIQGEIEAGNFDWRVDLEDVHMNIEARLTDRIGITGKKLHTGRSRNDQVATDIRLWLRDEIDLILAEITRLQQGLLEQAEREAQTIMPGFTHLQTAQPVTFGHHLLAWFEMLSRDYERLVDCRKRTNRMPLGSAALAGTTYPIDRELTCKLLGFEAVAGNSLDGVSDRDFAIEFCAAASVAMMHLSRFSEELVLWTSAQFQFVDLPDRFCTGSSIMPQKKNPDVPELVRGKSGRVFGALTGLLTLMKGQPLAYNKDNQEDKEPLFDAADTLRDSLRAFADMIPAIKPRHAIMREAALRGFSTATDLADYLVRRGLPFRDCHEIVGHAVKYGVDTGKDLAEMSLDELRQFSDQIEQDVFAVLTLEGSVNARDHIGGTAPAQVLAAVVRGKALLASR</sequence>
<evidence type="ECO:0000255" key="1">
    <source>
        <dbReference type="HAMAP-Rule" id="MF_00006"/>
    </source>
</evidence>
<name>ARLY_PSEPW</name>
<keyword id="KW-0028">Amino-acid biosynthesis</keyword>
<keyword id="KW-0055">Arginine biosynthesis</keyword>
<keyword id="KW-0963">Cytoplasm</keyword>
<keyword id="KW-0456">Lyase</keyword>
<reference key="1">
    <citation type="submission" date="2008-02" db="EMBL/GenBank/DDBJ databases">
        <title>Complete sequence of Pseudomonas putida W619.</title>
        <authorList>
            <person name="Copeland A."/>
            <person name="Lucas S."/>
            <person name="Lapidus A."/>
            <person name="Barry K."/>
            <person name="Detter J.C."/>
            <person name="Glavina del Rio T."/>
            <person name="Dalin E."/>
            <person name="Tice H."/>
            <person name="Pitluck S."/>
            <person name="Chain P."/>
            <person name="Malfatti S."/>
            <person name="Shin M."/>
            <person name="Vergez L."/>
            <person name="Schmutz J."/>
            <person name="Larimer F."/>
            <person name="Land M."/>
            <person name="Hauser L."/>
            <person name="Kyrpides N."/>
            <person name="Kim E."/>
            <person name="Taghavi S."/>
            <person name="Vangronsveld D."/>
            <person name="van der Lelie D."/>
            <person name="Richardson P."/>
        </authorList>
    </citation>
    <scope>NUCLEOTIDE SEQUENCE [LARGE SCALE GENOMIC DNA]</scope>
    <source>
        <strain>W619</strain>
    </source>
</reference>
<dbReference type="EC" id="4.3.2.1" evidence="1"/>
<dbReference type="EMBL" id="CP000949">
    <property type="protein sequence ID" value="ACA70760.1"/>
    <property type="molecule type" value="Genomic_DNA"/>
</dbReference>
<dbReference type="SMR" id="B1J1V0"/>
<dbReference type="STRING" id="390235.PputW619_0254"/>
<dbReference type="KEGG" id="ppw:PputW619_0254"/>
<dbReference type="eggNOG" id="COG0165">
    <property type="taxonomic scope" value="Bacteria"/>
</dbReference>
<dbReference type="HOGENOM" id="CLU_027272_2_3_6"/>
<dbReference type="OrthoDB" id="9769623at2"/>
<dbReference type="UniPathway" id="UPA00068">
    <property type="reaction ID" value="UER00114"/>
</dbReference>
<dbReference type="GO" id="GO:0005829">
    <property type="term" value="C:cytosol"/>
    <property type="evidence" value="ECO:0007669"/>
    <property type="project" value="TreeGrafter"/>
</dbReference>
<dbReference type="GO" id="GO:0004056">
    <property type="term" value="F:argininosuccinate lyase activity"/>
    <property type="evidence" value="ECO:0007669"/>
    <property type="project" value="UniProtKB-UniRule"/>
</dbReference>
<dbReference type="GO" id="GO:0042450">
    <property type="term" value="P:arginine biosynthetic process via ornithine"/>
    <property type="evidence" value="ECO:0007669"/>
    <property type="project" value="InterPro"/>
</dbReference>
<dbReference type="GO" id="GO:0006526">
    <property type="term" value="P:L-arginine biosynthetic process"/>
    <property type="evidence" value="ECO:0007669"/>
    <property type="project" value="UniProtKB-UniRule"/>
</dbReference>
<dbReference type="CDD" id="cd01359">
    <property type="entry name" value="Argininosuccinate_lyase"/>
    <property type="match status" value="1"/>
</dbReference>
<dbReference type="FunFam" id="1.10.275.10:FF:000002">
    <property type="entry name" value="Argininosuccinate lyase"/>
    <property type="match status" value="1"/>
</dbReference>
<dbReference type="FunFam" id="1.10.40.30:FF:000001">
    <property type="entry name" value="Argininosuccinate lyase"/>
    <property type="match status" value="1"/>
</dbReference>
<dbReference type="FunFam" id="1.20.200.10:FF:000015">
    <property type="entry name" value="argininosuccinate lyase isoform X2"/>
    <property type="match status" value="1"/>
</dbReference>
<dbReference type="Gene3D" id="1.10.40.30">
    <property type="entry name" value="Fumarase/aspartase (C-terminal domain)"/>
    <property type="match status" value="1"/>
</dbReference>
<dbReference type="Gene3D" id="1.20.200.10">
    <property type="entry name" value="Fumarase/aspartase (Central domain)"/>
    <property type="match status" value="1"/>
</dbReference>
<dbReference type="Gene3D" id="1.10.275.10">
    <property type="entry name" value="Fumarase/aspartase (N-terminal domain)"/>
    <property type="match status" value="1"/>
</dbReference>
<dbReference type="HAMAP" id="MF_00006">
    <property type="entry name" value="Arg_succ_lyase"/>
    <property type="match status" value="1"/>
</dbReference>
<dbReference type="InterPro" id="IPR029419">
    <property type="entry name" value="Arg_succ_lyase_C"/>
</dbReference>
<dbReference type="InterPro" id="IPR009049">
    <property type="entry name" value="Argininosuccinate_lyase"/>
</dbReference>
<dbReference type="InterPro" id="IPR024083">
    <property type="entry name" value="Fumarase/histidase_N"/>
</dbReference>
<dbReference type="InterPro" id="IPR020557">
    <property type="entry name" value="Fumarate_lyase_CS"/>
</dbReference>
<dbReference type="InterPro" id="IPR000362">
    <property type="entry name" value="Fumarate_lyase_fam"/>
</dbReference>
<dbReference type="InterPro" id="IPR022761">
    <property type="entry name" value="Fumarate_lyase_N"/>
</dbReference>
<dbReference type="InterPro" id="IPR008948">
    <property type="entry name" value="L-Aspartase-like"/>
</dbReference>
<dbReference type="NCBIfam" id="TIGR00838">
    <property type="entry name" value="argH"/>
    <property type="match status" value="1"/>
</dbReference>
<dbReference type="PANTHER" id="PTHR43814">
    <property type="entry name" value="ARGININOSUCCINATE LYASE"/>
    <property type="match status" value="1"/>
</dbReference>
<dbReference type="PANTHER" id="PTHR43814:SF1">
    <property type="entry name" value="ARGININOSUCCINATE LYASE"/>
    <property type="match status" value="1"/>
</dbReference>
<dbReference type="Pfam" id="PF14698">
    <property type="entry name" value="ASL_C2"/>
    <property type="match status" value="1"/>
</dbReference>
<dbReference type="Pfam" id="PF00206">
    <property type="entry name" value="Lyase_1"/>
    <property type="match status" value="1"/>
</dbReference>
<dbReference type="PRINTS" id="PR00145">
    <property type="entry name" value="ARGSUCLYASE"/>
</dbReference>
<dbReference type="PRINTS" id="PR00149">
    <property type="entry name" value="FUMRATELYASE"/>
</dbReference>
<dbReference type="SUPFAM" id="SSF48557">
    <property type="entry name" value="L-aspartase-like"/>
    <property type="match status" value="1"/>
</dbReference>
<dbReference type="PROSITE" id="PS00163">
    <property type="entry name" value="FUMARATE_LYASES"/>
    <property type="match status" value="1"/>
</dbReference>